<keyword id="KW-0456">Lyase</keyword>
<keyword id="KW-0460">Magnesium</keyword>
<keyword id="KW-0464">Manganese</keyword>
<keyword id="KW-0479">Metal-binding</keyword>
<keyword id="KW-0686">Riboflavin biosynthesis</keyword>
<reference key="1">
    <citation type="submission" date="2008-01" db="EMBL/GenBank/DDBJ databases">
        <title>Complete sequence of Shewanella halifaxensis HAW-EB4.</title>
        <authorList>
            <consortium name="US DOE Joint Genome Institute"/>
            <person name="Copeland A."/>
            <person name="Lucas S."/>
            <person name="Lapidus A."/>
            <person name="Glavina del Rio T."/>
            <person name="Dalin E."/>
            <person name="Tice H."/>
            <person name="Bruce D."/>
            <person name="Goodwin L."/>
            <person name="Pitluck S."/>
            <person name="Sims D."/>
            <person name="Brettin T."/>
            <person name="Detter J.C."/>
            <person name="Han C."/>
            <person name="Kuske C.R."/>
            <person name="Schmutz J."/>
            <person name="Larimer F."/>
            <person name="Land M."/>
            <person name="Hauser L."/>
            <person name="Kyrpides N."/>
            <person name="Kim E."/>
            <person name="Zhao J.-S."/>
            <person name="Richardson P."/>
        </authorList>
    </citation>
    <scope>NUCLEOTIDE SEQUENCE [LARGE SCALE GENOMIC DNA]</scope>
    <source>
        <strain>HAW-EB4</strain>
    </source>
</reference>
<gene>
    <name evidence="1" type="primary">ribB</name>
    <name type="ordered locus">Shal_4187</name>
</gene>
<feature type="chain" id="PRO_1000077269" description="3,4-dihydroxy-2-butanone 4-phosphate synthase">
    <location>
        <begin position="1"/>
        <end position="212"/>
    </location>
</feature>
<feature type="binding site" evidence="1">
    <location>
        <begin position="37"/>
        <end position="38"/>
    </location>
    <ligand>
        <name>D-ribulose 5-phosphate</name>
        <dbReference type="ChEBI" id="CHEBI:58121"/>
    </ligand>
</feature>
<feature type="binding site" evidence="1">
    <location>
        <position position="38"/>
    </location>
    <ligand>
        <name>Mg(2+)</name>
        <dbReference type="ChEBI" id="CHEBI:18420"/>
        <label>1</label>
    </ligand>
</feature>
<feature type="binding site" evidence="1">
    <location>
        <position position="38"/>
    </location>
    <ligand>
        <name>Mg(2+)</name>
        <dbReference type="ChEBI" id="CHEBI:18420"/>
        <label>2</label>
    </ligand>
</feature>
<feature type="binding site" evidence="1">
    <location>
        <position position="42"/>
    </location>
    <ligand>
        <name>D-ribulose 5-phosphate</name>
        <dbReference type="ChEBI" id="CHEBI:58121"/>
    </ligand>
</feature>
<feature type="binding site" evidence="1">
    <location>
        <begin position="150"/>
        <end position="154"/>
    </location>
    <ligand>
        <name>D-ribulose 5-phosphate</name>
        <dbReference type="ChEBI" id="CHEBI:58121"/>
    </ligand>
</feature>
<feature type="binding site" evidence="1">
    <location>
        <position position="153"/>
    </location>
    <ligand>
        <name>Mg(2+)</name>
        <dbReference type="ChEBI" id="CHEBI:18420"/>
        <label>2</label>
    </ligand>
</feature>
<feature type="binding site" evidence="1">
    <location>
        <position position="174"/>
    </location>
    <ligand>
        <name>D-ribulose 5-phosphate</name>
        <dbReference type="ChEBI" id="CHEBI:58121"/>
    </ligand>
</feature>
<feature type="site" description="Essential for catalytic activity" evidence="1">
    <location>
        <position position="136"/>
    </location>
</feature>
<feature type="site" description="Essential for catalytic activity" evidence="1">
    <location>
        <position position="174"/>
    </location>
</feature>
<comment type="function">
    <text evidence="1">Catalyzes the conversion of D-ribulose 5-phosphate to formate and 3,4-dihydroxy-2-butanone 4-phosphate.</text>
</comment>
<comment type="catalytic activity">
    <reaction evidence="1">
        <text>D-ribulose 5-phosphate = (2S)-2-hydroxy-3-oxobutyl phosphate + formate + H(+)</text>
        <dbReference type="Rhea" id="RHEA:18457"/>
        <dbReference type="ChEBI" id="CHEBI:15378"/>
        <dbReference type="ChEBI" id="CHEBI:15740"/>
        <dbReference type="ChEBI" id="CHEBI:58121"/>
        <dbReference type="ChEBI" id="CHEBI:58830"/>
        <dbReference type="EC" id="4.1.99.12"/>
    </reaction>
</comment>
<comment type="cofactor">
    <cofactor evidence="1">
        <name>Mg(2+)</name>
        <dbReference type="ChEBI" id="CHEBI:18420"/>
    </cofactor>
    <cofactor evidence="1">
        <name>Mn(2+)</name>
        <dbReference type="ChEBI" id="CHEBI:29035"/>
    </cofactor>
    <text evidence="1">Binds 2 divalent metal cations per subunit. Magnesium or manganese.</text>
</comment>
<comment type="pathway">
    <text evidence="1">Cofactor biosynthesis; riboflavin biosynthesis; 2-hydroxy-3-oxobutyl phosphate from D-ribulose 5-phosphate: step 1/1.</text>
</comment>
<comment type="subunit">
    <text evidence="1">Homodimer.</text>
</comment>
<comment type="similarity">
    <text evidence="1">Belongs to the DHBP synthase family.</text>
</comment>
<organism>
    <name type="scientific">Shewanella halifaxensis (strain HAW-EB4)</name>
    <dbReference type="NCBI Taxonomy" id="458817"/>
    <lineage>
        <taxon>Bacteria</taxon>
        <taxon>Pseudomonadati</taxon>
        <taxon>Pseudomonadota</taxon>
        <taxon>Gammaproteobacteria</taxon>
        <taxon>Alteromonadales</taxon>
        <taxon>Shewanellaceae</taxon>
        <taxon>Shewanella</taxon>
    </lineage>
</organism>
<proteinExistence type="inferred from homology"/>
<protein>
    <recommendedName>
        <fullName evidence="1">3,4-dihydroxy-2-butanone 4-phosphate synthase</fullName>
        <shortName evidence="1">DHBP synthase</shortName>
        <ecNumber evidence="1">4.1.99.12</ecNumber>
    </recommendedName>
</protein>
<evidence type="ECO:0000255" key="1">
    <source>
        <dbReference type="HAMAP-Rule" id="MF_00180"/>
    </source>
</evidence>
<accession>B0TMY9</accession>
<sequence>MNQSLLAPYGNAIERVNAALTALRQGKGVLVVDDEDRENEGDLIYSAETLTNEQMALLIRECSGIVCLCLTDERIEQLQLPPMVSDNNSQYGTAFTVSIEAKQGVTTGVSAADRVTTIKTAIADNAKPDDLARPGHVYPLRARPGGVLERRGHTEGTVDLMKLAGLKPYGVLCEVTLVDGTMARLPEIIEFGQQHDMPVLTIEDIVAYRTTQ</sequence>
<name>RIBB_SHEHH</name>
<dbReference type="EC" id="4.1.99.12" evidence="1"/>
<dbReference type="EMBL" id="CP000931">
    <property type="protein sequence ID" value="ABZ78727.1"/>
    <property type="molecule type" value="Genomic_DNA"/>
</dbReference>
<dbReference type="RefSeq" id="WP_012279231.1">
    <property type="nucleotide sequence ID" value="NC_010334.1"/>
</dbReference>
<dbReference type="SMR" id="B0TMY9"/>
<dbReference type="STRING" id="458817.Shal_4187"/>
<dbReference type="KEGG" id="shl:Shal_4187"/>
<dbReference type="eggNOG" id="COG0108">
    <property type="taxonomic scope" value="Bacteria"/>
</dbReference>
<dbReference type="HOGENOM" id="CLU_020273_3_0_6"/>
<dbReference type="OrthoDB" id="9793111at2"/>
<dbReference type="UniPathway" id="UPA00275">
    <property type="reaction ID" value="UER00399"/>
</dbReference>
<dbReference type="Proteomes" id="UP000001317">
    <property type="component" value="Chromosome"/>
</dbReference>
<dbReference type="GO" id="GO:0005829">
    <property type="term" value="C:cytosol"/>
    <property type="evidence" value="ECO:0007669"/>
    <property type="project" value="TreeGrafter"/>
</dbReference>
<dbReference type="GO" id="GO:0008686">
    <property type="term" value="F:3,4-dihydroxy-2-butanone-4-phosphate synthase activity"/>
    <property type="evidence" value="ECO:0007669"/>
    <property type="project" value="UniProtKB-UniRule"/>
</dbReference>
<dbReference type="GO" id="GO:0000287">
    <property type="term" value="F:magnesium ion binding"/>
    <property type="evidence" value="ECO:0007669"/>
    <property type="project" value="UniProtKB-UniRule"/>
</dbReference>
<dbReference type="GO" id="GO:0030145">
    <property type="term" value="F:manganese ion binding"/>
    <property type="evidence" value="ECO:0007669"/>
    <property type="project" value="UniProtKB-UniRule"/>
</dbReference>
<dbReference type="GO" id="GO:0009231">
    <property type="term" value="P:riboflavin biosynthetic process"/>
    <property type="evidence" value="ECO:0007669"/>
    <property type="project" value="UniProtKB-UniRule"/>
</dbReference>
<dbReference type="FunFam" id="3.90.870.10:FF:000002">
    <property type="entry name" value="3,4-dihydroxy-2-butanone 4-phosphate synthase"/>
    <property type="match status" value="1"/>
</dbReference>
<dbReference type="Gene3D" id="3.90.870.10">
    <property type="entry name" value="DHBP synthase"/>
    <property type="match status" value="1"/>
</dbReference>
<dbReference type="HAMAP" id="MF_00180">
    <property type="entry name" value="RibB"/>
    <property type="match status" value="1"/>
</dbReference>
<dbReference type="InterPro" id="IPR017945">
    <property type="entry name" value="DHBP_synth_RibB-like_a/b_dom"/>
</dbReference>
<dbReference type="InterPro" id="IPR000422">
    <property type="entry name" value="DHBP_synthase_RibB"/>
</dbReference>
<dbReference type="NCBIfam" id="TIGR00506">
    <property type="entry name" value="ribB"/>
    <property type="match status" value="1"/>
</dbReference>
<dbReference type="PANTHER" id="PTHR21327:SF38">
    <property type="entry name" value="3,4-DIHYDROXY-2-BUTANONE 4-PHOSPHATE SYNTHASE"/>
    <property type="match status" value="1"/>
</dbReference>
<dbReference type="PANTHER" id="PTHR21327">
    <property type="entry name" value="GTP CYCLOHYDROLASE II-RELATED"/>
    <property type="match status" value="1"/>
</dbReference>
<dbReference type="Pfam" id="PF00926">
    <property type="entry name" value="DHBP_synthase"/>
    <property type="match status" value="1"/>
</dbReference>
<dbReference type="SUPFAM" id="SSF55821">
    <property type="entry name" value="YrdC/RibB"/>
    <property type="match status" value="1"/>
</dbReference>